<accession>Q8TYX0</accession>
<gene>
    <name evidence="1" type="primary">htpX</name>
    <name type="ordered locus">MK0171</name>
</gene>
<name>HTPX_METKA</name>
<evidence type="ECO:0000255" key="1">
    <source>
        <dbReference type="HAMAP-Rule" id="MF_00188"/>
    </source>
</evidence>
<sequence>MLEAAGAVLLGSAALLMVGRLGNRGFFLWLRTVGILGLLVGILSLALAALTGSAIAGLVVGVITAAMMYLFSSRIVRIQMGAVDAEEFLRYKPEYADKLRRVQEMVSKLASKAGLPEPELVVVPEETGVGGYPNAFATGRRSKPTVGVTEGLLRHLDDDEIYGVLGHELAHVKNRDTLVMTVAAAVSTAIAYAFDPWLNAMYTEDWEDIAFLVLAGMLASLISTLLVAAISRSREYLADEEGAKLSGNPMALAEALEKIEAIVKSNPAPARSLSEVSTAHLWIENPFRGGLLRLFSTHPPVEKRVERLRRLARELQGP</sequence>
<feature type="chain" id="PRO_0000138918" description="Protease HtpX homolog">
    <location>
        <begin position="1"/>
        <end position="318"/>
    </location>
</feature>
<feature type="transmembrane region" description="Helical" evidence="1">
    <location>
        <begin position="1"/>
        <end position="21"/>
    </location>
</feature>
<feature type="transmembrane region" description="Helical" evidence="1">
    <location>
        <begin position="35"/>
        <end position="55"/>
    </location>
</feature>
<feature type="transmembrane region" description="Helical" evidence="1">
    <location>
        <begin position="56"/>
        <end position="76"/>
    </location>
</feature>
<feature type="transmembrane region" description="Helical" evidence="1">
    <location>
        <begin position="178"/>
        <end position="198"/>
    </location>
</feature>
<feature type="transmembrane region" description="Helical" evidence="1">
    <location>
        <begin position="209"/>
        <end position="229"/>
    </location>
</feature>
<feature type="active site" evidence="1">
    <location>
        <position position="168"/>
    </location>
</feature>
<feature type="binding site" evidence="1">
    <location>
        <position position="167"/>
    </location>
    <ligand>
        <name>Zn(2+)</name>
        <dbReference type="ChEBI" id="CHEBI:29105"/>
        <note>catalytic</note>
    </ligand>
</feature>
<feature type="binding site" evidence="1">
    <location>
        <position position="171"/>
    </location>
    <ligand>
        <name>Zn(2+)</name>
        <dbReference type="ChEBI" id="CHEBI:29105"/>
        <note>catalytic</note>
    </ligand>
</feature>
<feature type="binding site" evidence="1">
    <location>
        <position position="235"/>
    </location>
    <ligand>
        <name>Zn(2+)</name>
        <dbReference type="ChEBI" id="CHEBI:29105"/>
        <note>catalytic</note>
    </ligand>
</feature>
<dbReference type="EC" id="3.4.24.-" evidence="1"/>
<dbReference type="EMBL" id="AE009439">
    <property type="protein sequence ID" value="AAM01388.1"/>
    <property type="molecule type" value="Genomic_DNA"/>
</dbReference>
<dbReference type="FunCoup" id="Q8TYX0">
    <property type="interactions" value="2"/>
</dbReference>
<dbReference type="STRING" id="190192.MK0171"/>
<dbReference type="PaxDb" id="190192-MK0171"/>
<dbReference type="EnsemblBacteria" id="AAM01388">
    <property type="protein sequence ID" value="AAM01388"/>
    <property type="gene ID" value="MK0171"/>
</dbReference>
<dbReference type="KEGG" id="mka:MK0171"/>
<dbReference type="HOGENOM" id="CLU_042266_3_0_2"/>
<dbReference type="InParanoid" id="Q8TYX0"/>
<dbReference type="Proteomes" id="UP000001826">
    <property type="component" value="Chromosome"/>
</dbReference>
<dbReference type="GO" id="GO:0005886">
    <property type="term" value="C:plasma membrane"/>
    <property type="evidence" value="ECO:0007669"/>
    <property type="project" value="UniProtKB-SubCell"/>
</dbReference>
<dbReference type="GO" id="GO:0004222">
    <property type="term" value="F:metalloendopeptidase activity"/>
    <property type="evidence" value="ECO:0007669"/>
    <property type="project" value="UniProtKB-UniRule"/>
</dbReference>
<dbReference type="GO" id="GO:0008270">
    <property type="term" value="F:zinc ion binding"/>
    <property type="evidence" value="ECO:0007669"/>
    <property type="project" value="UniProtKB-UniRule"/>
</dbReference>
<dbReference type="GO" id="GO:0006508">
    <property type="term" value="P:proteolysis"/>
    <property type="evidence" value="ECO:0007669"/>
    <property type="project" value="UniProtKB-KW"/>
</dbReference>
<dbReference type="Gene3D" id="3.30.2010.10">
    <property type="entry name" value="Metalloproteases ('zincins'), catalytic domain"/>
    <property type="match status" value="1"/>
</dbReference>
<dbReference type="HAMAP" id="MF_00188">
    <property type="entry name" value="Pept_M48_protease_HtpX"/>
    <property type="match status" value="1"/>
</dbReference>
<dbReference type="InterPro" id="IPR050083">
    <property type="entry name" value="HtpX_protease"/>
</dbReference>
<dbReference type="InterPro" id="IPR022919">
    <property type="entry name" value="Pept_M48_protease_HtpX"/>
</dbReference>
<dbReference type="InterPro" id="IPR001915">
    <property type="entry name" value="Peptidase_M48"/>
</dbReference>
<dbReference type="PANTHER" id="PTHR43221">
    <property type="entry name" value="PROTEASE HTPX"/>
    <property type="match status" value="1"/>
</dbReference>
<dbReference type="PANTHER" id="PTHR43221:SF2">
    <property type="entry name" value="PROTEASE HTPX HOMOLOG"/>
    <property type="match status" value="1"/>
</dbReference>
<dbReference type="Pfam" id="PF01435">
    <property type="entry name" value="Peptidase_M48"/>
    <property type="match status" value="1"/>
</dbReference>
<proteinExistence type="inferred from homology"/>
<protein>
    <recommendedName>
        <fullName evidence="1">Protease HtpX homolog</fullName>
        <ecNumber evidence="1">3.4.24.-</ecNumber>
    </recommendedName>
</protein>
<reference key="1">
    <citation type="journal article" date="2002" name="Proc. Natl. Acad. Sci. U.S.A.">
        <title>The complete genome of hyperthermophile Methanopyrus kandleri AV19 and monophyly of archaeal methanogens.</title>
        <authorList>
            <person name="Slesarev A.I."/>
            <person name="Mezhevaya K.V."/>
            <person name="Makarova K.S."/>
            <person name="Polushin N.N."/>
            <person name="Shcherbinina O.V."/>
            <person name="Shakhova V.V."/>
            <person name="Belova G.I."/>
            <person name="Aravind L."/>
            <person name="Natale D.A."/>
            <person name="Rogozin I.B."/>
            <person name="Tatusov R.L."/>
            <person name="Wolf Y.I."/>
            <person name="Stetter K.O."/>
            <person name="Malykh A.G."/>
            <person name="Koonin E.V."/>
            <person name="Kozyavkin S.A."/>
        </authorList>
    </citation>
    <scope>NUCLEOTIDE SEQUENCE [LARGE SCALE GENOMIC DNA]</scope>
    <source>
        <strain>AV19 / DSM 6324 / JCM 9639 / NBRC 100938</strain>
    </source>
</reference>
<keyword id="KW-1003">Cell membrane</keyword>
<keyword id="KW-0378">Hydrolase</keyword>
<keyword id="KW-0472">Membrane</keyword>
<keyword id="KW-0479">Metal-binding</keyword>
<keyword id="KW-0482">Metalloprotease</keyword>
<keyword id="KW-0645">Protease</keyword>
<keyword id="KW-1185">Reference proteome</keyword>
<keyword id="KW-0812">Transmembrane</keyword>
<keyword id="KW-1133">Transmembrane helix</keyword>
<keyword id="KW-0862">Zinc</keyword>
<organism>
    <name type="scientific">Methanopyrus kandleri (strain AV19 / DSM 6324 / JCM 9639 / NBRC 100938)</name>
    <dbReference type="NCBI Taxonomy" id="190192"/>
    <lineage>
        <taxon>Archaea</taxon>
        <taxon>Methanobacteriati</taxon>
        <taxon>Methanobacteriota</taxon>
        <taxon>Methanomada group</taxon>
        <taxon>Methanopyri</taxon>
        <taxon>Methanopyrales</taxon>
        <taxon>Methanopyraceae</taxon>
        <taxon>Methanopyrus</taxon>
    </lineage>
</organism>
<comment type="cofactor">
    <cofactor evidence="1">
        <name>Zn(2+)</name>
        <dbReference type="ChEBI" id="CHEBI:29105"/>
    </cofactor>
    <text evidence="1">Binds 1 zinc ion per subunit.</text>
</comment>
<comment type="subcellular location">
    <subcellularLocation>
        <location evidence="1">Cell membrane</location>
        <topology evidence="1">Multi-pass membrane protein</topology>
    </subcellularLocation>
</comment>
<comment type="similarity">
    <text evidence="1">Belongs to the peptidase M48B family.</text>
</comment>